<accession>Q6ALU4</accession>
<evidence type="ECO:0000255" key="1">
    <source>
        <dbReference type="HAMAP-Rule" id="MF_00230"/>
    </source>
</evidence>
<keyword id="KW-0169">Cobalamin biosynthesis</keyword>
<keyword id="KW-0328">Glycosyltransferase</keyword>
<keyword id="KW-1185">Reference proteome</keyword>
<keyword id="KW-0808">Transferase</keyword>
<proteinExistence type="inferred from homology"/>
<gene>
    <name evidence="1" type="primary">cobT</name>
    <name type="ordered locus">DP1952</name>
</gene>
<protein>
    <recommendedName>
        <fullName evidence="1">Nicotinate-nucleotide--dimethylbenzimidazole phosphoribosyltransferase</fullName>
        <shortName evidence="1">NN:DBI PRT</shortName>
        <ecNumber evidence="1">2.4.2.21</ecNumber>
    </recommendedName>
    <alternativeName>
        <fullName evidence="1">N(1)-alpha-phosphoribosyltransferase</fullName>
    </alternativeName>
</protein>
<name>COBT_DESPS</name>
<organism>
    <name type="scientific">Desulfotalea psychrophila (strain LSv54 / DSM 12343)</name>
    <dbReference type="NCBI Taxonomy" id="177439"/>
    <lineage>
        <taxon>Bacteria</taxon>
        <taxon>Pseudomonadati</taxon>
        <taxon>Thermodesulfobacteriota</taxon>
        <taxon>Desulfobulbia</taxon>
        <taxon>Desulfobulbales</taxon>
        <taxon>Desulfocapsaceae</taxon>
        <taxon>Desulfotalea</taxon>
    </lineage>
</organism>
<feature type="chain" id="PRO_1000021591" description="Nicotinate-nucleotide--dimethylbenzimidazole phosphoribosyltransferase">
    <location>
        <begin position="1"/>
        <end position="355"/>
    </location>
</feature>
<feature type="active site" description="Proton acceptor" evidence="1">
    <location>
        <position position="321"/>
    </location>
</feature>
<comment type="function">
    <text evidence="1">Catalyzes the synthesis of alpha-ribazole-5'-phosphate from nicotinate mononucleotide (NAMN) and 5,6-dimethylbenzimidazole (DMB).</text>
</comment>
<comment type="catalytic activity">
    <reaction evidence="1">
        <text>5,6-dimethylbenzimidazole + nicotinate beta-D-ribonucleotide = alpha-ribazole 5'-phosphate + nicotinate + H(+)</text>
        <dbReference type="Rhea" id="RHEA:11196"/>
        <dbReference type="ChEBI" id="CHEBI:15378"/>
        <dbReference type="ChEBI" id="CHEBI:15890"/>
        <dbReference type="ChEBI" id="CHEBI:32544"/>
        <dbReference type="ChEBI" id="CHEBI:57502"/>
        <dbReference type="ChEBI" id="CHEBI:57918"/>
        <dbReference type="EC" id="2.4.2.21"/>
    </reaction>
</comment>
<comment type="pathway">
    <text evidence="1">Nucleoside biosynthesis; alpha-ribazole biosynthesis; alpha-ribazole from 5,6-dimethylbenzimidazole: step 1/2.</text>
</comment>
<comment type="similarity">
    <text evidence="1">Belongs to the CobT family.</text>
</comment>
<dbReference type="EC" id="2.4.2.21" evidence="1"/>
<dbReference type="EMBL" id="CR522870">
    <property type="protein sequence ID" value="CAG36681.1"/>
    <property type="molecule type" value="Genomic_DNA"/>
</dbReference>
<dbReference type="RefSeq" id="WP_011189193.1">
    <property type="nucleotide sequence ID" value="NC_006138.1"/>
</dbReference>
<dbReference type="SMR" id="Q6ALU4"/>
<dbReference type="STRING" id="177439.DP1952"/>
<dbReference type="KEGG" id="dps:DP1952"/>
<dbReference type="eggNOG" id="COG2038">
    <property type="taxonomic scope" value="Bacteria"/>
</dbReference>
<dbReference type="HOGENOM" id="CLU_002982_0_0_7"/>
<dbReference type="OrthoDB" id="9781491at2"/>
<dbReference type="UniPathway" id="UPA00061">
    <property type="reaction ID" value="UER00516"/>
</dbReference>
<dbReference type="Proteomes" id="UP000000602">
    <property type="component" value="Chromosome"/>
</dbReference>
<dbReference type="GO" id="GO:0008939">
    <property type="term" value="F:nicotinate-nucleotide-dimethylbenzimidazole phosphoribosyltransferase activity"/>
    <property type="evidence" value="ECO:0007669"/>
    <property type="project" value="UniProtKB-UniRule"/>
</dbReference>
<dbReference type="GO" id="GO:0009236">
    <property type="term" value="P:cobalamin biosynthetic process"/>
    <property type="evidence" value="ECO:0007669"/>
    <property type="project" value="UniProtKB-KW"/>
</dbReference>
<dbReference type="CDD" id="cd02439">
    <property type="entry name" value="DMB-PRT_CobT"/>
    <property type="match status" value="1"/>
</dbReference>
<dbReference type="FunFam" id="3.40.50.10210:FF:000001">
    <property type="entry name" value="Nicotinate-nucleotide--dimethylbenzimidazole phosphoribosyltransferase"/>
    <property type="match status" value="1"/>
</dbReference>
<dbReference type="Gene3D" id="1.10.1610.10">
    <property type="match status" value="1"/>
</dbReference>
<dbReference type="Gene3D" id="3.40.50.10210">
    <property type="match status" value="1"/>
</dbReference>
<dbReference type="HAMAP" id="MF_00230">
    <property type="entry name" value="CobT"/>
    <property type="match status" value="1"/>
</dbReference>
<dbReference type="InterPro" id="IPR003200">
    <property type="entry name" value="Nict_dMeBzImd_PRibTrfase"/>
</dbReference>
<dbReference type="InterPro" id="IPR017846">
    <property type="entry name" value="Nict_dMeBzImd_PRibTrfase_bact"/>
</dbReference>
<dbReference type="InterPro" id="IPR023195">
    <property type="entry name" value="Nict_dMeBzImd_PRibTrfase_N"/>
</dbReference>
<dbReference type="InterPro" id="IPR036087">
    <property type="entry name" value="Nict_dMeBzImd_PRibTrfase_sf"/>
</dbReference>
<dbReference type="NCBIfam" id="TIGR03160">
    <property type="entry name" value="cobT_DBIPRT"/>
    <property type="match status" value="1"/>
</dbReference>
<dbReference type="NCBIfam" id="NF000996">
    <property type="entry name" value="PRK00105.1"/>
    <property type="match status" value="1"/>
</dbReference>
<dbReference type="PANTHER" id="PTHR43463">
    <property type="entry name" value="NICOTINATE-NUCLEOTIDE--DIMETHYLBENZIMIDAZOLE PHOSPHORIBOSYLTRANSFERASE"/>
    <property type="match status" value="1"/>
</dbReference>
<dbReference type="PANTHER" id="PTHR43463:SF1">
    <property type="entry name" value="NICOTINATE-NUCLEOTIDE--DIMETHYLBENZIMIDAZOLE PHOSPHORIBOSYLTRANSFERASE"/>
    <property type="match status" value="1"/>
</dbReference>
<dbReference type="Pfam" id="PF02277">
    <property type="entry name" value="DBI_PRT"/>
    <property type="match status" value="1"/>
</dbReference>
<dbReference type="SUPFAM" id="SSF52733">
    <property type="entry name" value="Nicotinate mononucleotide:5,6-dimethylbenzimidazole phosphoribosyltransferase (CobT)"/>
    <property type="match status" value="1"/>
</dbReference>
<reference key="1">
    <citation type="journal article" date="2004" name="Environ. Microbiol.">
        <title>The genome of Desulfotalea psychrophila, a sulfate-reducing bacterium from permanently cold Arctic sediments.</title>
        <authorList>
            <person name="Rabus R."/>
            <person name="Ruepp A."/>
            <person name="Frickey T."/>
            <person name="Rattei T."/>
            <person name="Fartmann B."/>
            <person name="Stark M."/>
            <person name="Bauer M."/>
            <person name="Zibat A."/>
            <person name="Lombardot T."/>
            <person name="Becker I."/>
            <person name="Amann J."/>
            <person name="Gellner K."/>
            <person name="Teeling H."/>
            <person name="Leuschner W.D."/>
            <person name="Gloeckner F.-O."/>
            <person name="Lupas A.N."/>
            <person name="Amann R."/>
            <person name="Klenk H.-P."/>
        </authorList>
    </citation>
    <scope>NUCLEOTIDE SEQUENCE [LARGE SCALE GENOMIC DNA]</scope>
    <source>
        <strain>DSM 12343 / LSv54</strain>
    </source>
</reference>
<sequence length="355" mass="37156">MSLLDRTLLEIFPQDSDSRDAAKARLDNLVMPHWALGDLMDLAIDLAGMQRTIKPLVDKRAIVTMAGDHGVAAEGVSKFPAEVTVQMVHAIIGGSAGVNALARSAGADVFVVDMGVNADLRDLVEQKKLINKKVGLGTGNIAKGPAMSRAMAVRAVEGGIDVAFALSTKYNIIGTGEMGIGNTTPSAAIAAVCTGKTVEEITGRGSGLNDAELQTKIDIIKKSIEINKPNSKDGLDILAKVGGFEIGGIAGLIIGCAAKKIPVVVDGYISTAGALIAAKIEPFVRDYLIFAHRSVEPGHVHMQEFLGCKRPLLDLNFRLGEGTGAAMAMNLVDGAKAILTDMSTFDEIAVTAPEK</sequence>